<dbReference type="EMBL" id="CP000946">
    <property type="protein sequence ID" value="ACA76086.1"/>
    <property type="molecule type" value="Genomic_DNA"/>
</dbReference>
<dbReference type="RefSeq" id="WP_000091945.1">
    <property type="nucleotide sequence ID" value="NZ_MTFT01000014.1"/>
</dbReference>
<dbReference type="SMR" id="B1IPZ4"/>
<dbReference type="GeneID" id="86948169"/>
<dbReference type="KEGG" id="ecl:EcolC_0408"/>
<dbReference type="HOGENOM" id="CLU_065464_1_2_6"/>
<dbReference type="GO" id="GO:0022625">
    <property type="term" value="C:cytosolic large ribosomal subunit"/>
    <property type="evidence" value="ECO:0007669"/>
    <property type="project" value="TreeGrafter"/>
</dbReference>
<dbReference type="GO" id="GO:0019843">
    <property type="term" value="F:rRNA binding"/>
    <property type="evidence" value="ECO:0007669"/>
    <property type="project" value="UniProtKB-UniRule"/>
</dbReference>
<dbReference type="GO" id="GO:0003735">
    <property type="term" value="F:structural constituent of ribosome"/>
    <property type="evidence" value="ECO:0007669"/>
    <property type="project" value="InterPro"/>
</dbReference>
<dbReference type="GO" id="GO:0002181">
    <property type="term" value="P:cytoplasmic translation"/>
    <property type="evidence" value="ECO:0007669"/>
    <property type="project" value="TreeGrafter"/>
</dbReference>
<dbReference type="FunFam" id="3.90.930.12:FF:000001">
    <property type="entry name" value="50S ribosomal protein L6"/>
    <property type="match status" value="1"/>
</dbReference>
<dbReference type="FunFam" id="3.90.930.12:FF:000002">
    <property type="entry name" value="50S ribosomal protein L6"/>
    <property type="match status" value="1"/>
</dbReference>
<dbReference type="Gene3D" id="3.90.930.12">
    <property type="entry name" value="Ribosomal protein L6, alpha-beta domain"/>
    <property type="match status" value="2"/>
</dbReference>
<dbReference type="HAMAP" id="MF_01365_B">
    <property type="entry name" value="Ribosomal_uL6_B"/>
    <property type="match status" value="1"/>
</dbReference>
<dbReference type="InterPro" id="IPR000702">
    <property type="entry name" value="Ribosomal_uL6-like"/>
</dbReference>
<dbReference type="InterPro" id="IPR036789">
    <property type="entry name" value="Ribosomal_uL6-like_a/b-dom_sf"/>
</dbReference>
<dbReference type="InterPro" id="IPR020040">
    <property type="entry name" value="Ribosomal_uL6_a/b-dom"/>
</dbReference>
<dbReference type="InterPro" id="IPR019906">
    <property type="entry name" value="Ribosomal_uL6_bac-type"/>
</dbReference>
<dbReference type="InterPro" id="IPR002358">
    <property type="entry name" value="Ribosomal_uL6_CS"/>
</dbReference>
<dbReference type="NCBIfam" id="TIGR03654">
    <property type="entry name" value="L6_bact"/>
    <property type="match status" value="1"/>
</dbReference>
<dbReference type="PANTHER" id="PTHR11655">
    <property type="entry name" value="60S/50S RIBOSOMAL PROTEIN L6/L9"/>
    <property type="match status" value="1"/>
</dbReference>
<dbReference type="PANTHER" id="PTHR11655:SF14">
    <property type="entry name" value="LARGE RIBOSOMAL SUBUNIT PROTEIN UL6M"/>
    <property type="match status" value="1"/>
</dbReference>
<dbReference type="Pfam" id="PF00347">
    <property type="entry name" value="Ribosomal_L6"/>
    <property type="match status" value="2"/>
</dbReference>
<dbReference type="PIRSF" id="PIRSF002162">
    <property type="entry name" value="Ribosomal_L6"/>
    <property type="match status" value="1"/>
</dbReference>
<dbReference type="PRINTS" id="PR00059">
    <property type="entry name" value="RIBOSOMALL6"/>
</dbReference>
<dbReference type="SUPFAM" id="SSF56053">
    <property type="entry name" value="Ribosomal protein L6"/>
    <property type="match status" value="2"/>
</dbReference>
<dbReference type="PROSITE" id="PS00525">
    <property type="entry name" value="RIBOSOMAL_L6_1"/>
    <property type="match status" value="1"/>
</dbReference>
<gene>
    <name evidence="1" type="primary">rplF</name>
    <name type="ordered locus">EcolC_0408</name>
</gene>
<protein>
    <recommendedName>
        <fullName evidence="1">Large ribosomal subunit protein uL6</fullName>
    </recommendedName>
    <alternativeName>
        <fullName evidence="2">50S ribosomal protein L6</fullName>
    </alternativeName>
</protein>
<accession>B1IPZ4</accession>
<feature type="chain" id="PRO_1000087042" description="Large ribosomal subunit protein uL6">
    <location>
        <begin position="1"/>
        <end position="177"/>
    </location>
</feature>
<feature type="modified residue" description="N6-acetyllysine" evidence="1">
    <location>
        <position position="44"/>
    </location>
</feature>
<name>RL6_ECOLC</name>
<sequence length="177" mass="18904">MSRVAKAPVVVPAGVDVKINGQVITIKGKNGELTRTLNDAVEVKHADNTLTFGPRDGYADGWAQAGTARALLNSMVIGVTEGFTKKLQLVGVGYRAAVKGNVINLSLGFSHPVDHQLPAGITAECPTQTEIVLKGADKQVIGQVAADLRAYRRPEPYKGKGVRYADEVVRTKEAKKK</sequence>
<reference key="1">
    <citation type="submission" date="2008-02" db="EMBL/GenBank/DDBJ databases">
        <title>Complete sequence of Escherichia coli C str. ATCC 8739.</title>
        <authorList>
            <person name="Copeland A."/>
            <person name="Lucas S."/>
            <person name="Lapidus A."/>
            <person name="Glavina del Rio T."/>
            <person name="Dalin E."/>
            <person name="Tice H."/>
            <person name="Bruce D."/>
            <person name="Goodwin L."/>
            <person name="Pitluck S."/>
            <person name="Kiss H."/>
            <person name="Brettin T."/>
            <person name="Detter J.C."/>
            <person name="Han C."/>
            <person name="Kuske C.R."/>
            <person name="Schmutz J."/>
            <person name="Larimer F."/>
            <person name="Land M."/>
            <person name="Hauser L."/>
            <person name="Kyrpides N."/>
            <person name="Mikhailova N."/>
            <person name="Ingram L."/>
            <person name="Richardson P."/>
        </authorList>
    </citation>
    <scope>NUCLEOTIDE SEQUENCE [LARGE SCALE GENOMIC DNA]</scope>
    <source>
        <strain>ATCC 8739 / DSM 1576 / NBRC 3972 / NCIMB 8545 / WDCM 00012 / Crooks</strain>
    </source>
</reference>
<proteinExistence type="inferred from homology"/>
<keyword id="KW-0007">Acetylation</keyword>
<keyword id="KW-0687">Ribonucleoprotein</keyword>
<keyword id="KW-0689">Ribosomal protein</keyword>
<keyword id="KW-0694">RNA-binding</keyword>
<keyword id="KW-0699">rRNA-binding</keyword>
<comment type="function">
    <text evidence="1">This protein binds to the 23S rRNA, and is important in its secondary structure. It is located near the subunit interface in the base of the L7/L12 stalk, and near the tRNA binding site of the peptidyltransferase center.</text>
</comment>
<comment type="subunit">
    <text evidence="1">Part of the 50S ribosomal subunit.</text>
</comment>
<comment type="similarity">
    <text evidence="1">Belongs to the universal ribosomal protein uL6 family.</text>
</comment>
<evidence type="ECO:0000255" key="1">
    <source>
        <dbReference type="HAMAP-Rule" id="MF_01365"/>
    </source>
</evidence>
<evidence type="ECO:0000305" key="2"/>
<organism>
    <name type="scientific">Escherichia coli (strain ATCC 8739 / DSM 1576 / NBRC 3972 / NCIMB 8545 / WDCM 00012 / Crooks)</name>
    <dbReference type="NCBI Taxonomy" id="481805"/>
    <lineage>
        <taxon>Bacteria</taxon>
        <taxon>Pseudomonadati</taxon>
        <taxon>Pseudomonadota</taxon>
        <taxon>Gammaproteobacteria</taxon>
        <taxon>Enterobacterales</taxon>
        <taxon>Enterobacteriaceae</taxon>
        <taxon>Escherichia</taxon>
    </lineage>
</organism>